<feature type="chain" id="PRO_1000055784" description="Large ribosomal subunit protein bL17">
    <location>
        <begin position="1"/>
        <end position="131"/>
    </location>
</feature>
<protein>
    <recommendedName>
        <fullName evidence="1">Large ribosomal subunit protein bL17</fullName>
    </recommendedName>
    <alternativeName>
        <fullName evidence="2">50S ribosomal protein L17</fullName>
    </alternativeName>
</protein>
<gene>
    <name evidence="1" type="primary">rplQ</name>
    <name type="ordered locus">BMA10229_A1951</name>
</gene>
<keyword id="KW-0687">Ribonucleoprotein</keyword>
<keyword id="KW-0689">Ribosomal protein</keyword>
<sequence>MRHRHGLRKLNRTSSHRLAMLRNMSNSLIEHEVIKTTLPKAKELRKVVEPLITLGKKPSLANRRLAFNRLRDRDSVAKLFDVLGPRFANRPGGYLRILKFGFRVGDNAPMALVELLDRPEVEETENVQEAE</sequence>
<organism>
    <name type="scientific">Burkholderia mallei (strain NCTC 10229)</name>
    <dbReference type="NCBI Taxonomy" id="412022"/>
    <lineage>
        <taxon>Bacteria</taxon>
        <taxon>Pseudomonadati</taxon>
        <taxon>Pseudomonadota</taxon>
        <taxon>Betaproteobacteria</taxon>
        <taxon>Burkholderiales</taxon>
        <taxon>Burkholderiaceae</taxon>
        <taxon>Burkholderia</taxon>
        <taxon>pseudomallei group</taxon>
    </lineage>
</organism>
<reference key="1">
    <citation type="journal article" date="2010" name="Genome Biol. Evol.">
        <title>Continuing evolution of Burkholderia mallei through genome reduction and large-scale rearrangements.</title>
        <authorList>
            <person name="Losada L."/>
            <person name="Ronning C.M."/>
            <person name="DeShazer D."/>
            <person name="Woods D."/>
            <person name="Fedorova N."/>
            <person name="Kim H.S."/>
            <person name="Shabalina S.A."/>
            <person name="Pearson T.R."/>
            <person name="Brinkac L."/>
            <person name="Tan P."/>
            <person name="Nandi T."/>
            <person name="Crabtree J."/>
            <person name="Badger J."/>
            <person name="Beckstrom-Sternberg S."/>
            <person name="Saqib M."/>
            <person name="Schutzer S.E."/>
            <person name="Keim P."/>
            <person name="Nierman W.C."/>
        </authorList>
    </citation>
    <scope>NUCLEOTIDE SEQUENCE [LARGE SCALE GENOMIC DNA]</scope>
    <source>
        <strain>NCTC 10229</strain>
    </source>
</reference>
<accession>A2S7K3</accession>
<proteinExistence type="inferred from homology"/>
<name>RL17_BURM9</name>
<comment type="subunit">
    <text evidence="1">Part of the 50S ribosomal subunit. Contacts protein L32.</text>
</comment>
<comment type="similarity">
    <text evidence="1">Belongs to the bacterial ribosomal protein bL17 family.</text>
</comment>
<evidence type="ECO:0000255" key="1">
    <source>
        <dbReference type="HAMAP-Rule" id="MF_01368"/>
    </source>
</evidence>
<evidence type="ECO:0000305" key="2"/>
<dbReference type="EMBL" id="CP000546">
    <property type="protein sequence ID" value="ABN03699.1"/>
    <property type="molecule type" value="Genomic_DNA"/>
</dbReference>
<dbReference type="RefSeq" id="WP_004197924.1">
    <property type="nucleotide sequence ID" value="NC_008836.1"/>
</dbReference>
<dbReference type="SMR" id="A2S7K3"/>
<dbReference type="GeneID" id="93061805"/>
<dbReference type="KEGG" id="bml:BMA10229_A1951"/>
<dbReference type="HOGENOM" id="CLU_074407_2_0_4"/>
<dbReference type="Proteomes" id="UP000002283">
    <property type="component" value="Chromosome I"/>
</dbReference>
<dbReference type="GO" id="GO:0022625">
    <property type="term" value="C:cytosolic large ribosomal subunit"/>
    <property type="evidence" value="ECO:0007669"/>
    <property type="project" value="TreeGrafter"/>
</dbReference>
<dbReference type="GO" id="GO:0003735">
    <property type="term" value="F:structural constituent of ribosome"/>
    <property type="evidence" value="ECO:0007669"/>
    <property type="project" value="InterPro"/>
</dbReference>
<dbReference type="GO" id="GO:0006412">
    <property type="term" value="P:translation"/>
    <property type="evidence" value="ECO:0007669"/>
    <property type="project" value="UniProtKB-UniRule"/>
</dbReference>
<dbReference type="FunFam" id="3.90.1030.10:FF:000001">
    <property type="entry name" value="50S ribosomal protein L17"/>
    <property type="match status" value="1"/>
</dbReference>
<dbReference type="Gene3D" id="3.90.1030.10">
    <property type="entry name" value="Ribosomal protein L17"/>
    <property type="match status" value="1"/>
</dbReference>
<dbReference type="HAMAP" id="MF_01368">
    <property type="entry name" value="Ribosomal_bL17"/>
    <property type="match status" value="1"/>
</dbReference>
<dbReference type="InterPro" id="IPR000456">
    <property type="entry name" value="Ribosomal_bL17"/>
</dbReference>
<dbReference type="InterPro" id="IPR047859">
    <property type="entry name" value="Ribosomal_bL17_CS"/>
</dbReference>
<dbReference type="InterPro" id="IPR036373">
    <property type="entry name" value="Ribosomal_bL17_sf"/>
</dbReference>
<dbReference type="NCBIfam" id="TIGR00059">
    <property type="entry name" value="L17"/>
    <property type="match status" value="1"/>
</dbReference>
<dbReference type="PANTHER" id="PTHR14413:SF16">
    <property type="entry name" value="LARGE RIBOSOMAL SUBUNIT PROTEIN BL17M"/>
    <property type="match status" value="1"/>
</dbReference>
<dbReference type="PANTHER" id="PTHR14413">
    <property type="entry name" value="RIBOSOMAL PROTEIN L17"/>
    <property type="match status" value="1"/>
</dbReference>
<dbReference type="Pfam" id="PF01196">
    <property type="entry name" value="Ribosomal_L17"/>
    <property type="match status" value="1"/>
</dbReference>
<dbReference type="SUPFAM" id="SSF64263">
    <property type="entry name" value="Prokaryotic ribosomal protein L17"/>
    <property type="match status" value="1"/>
</dbReference>
<dbReference type="PROSITE" id="PS01167">
    <property type="entry name" value="RIBOSOMAL_L17"/>
    <property type="match status" value="1"/>
</dbReference>